<feature type="chain" id="PRO_0000146611" description="Small ribosomal subunit protein uS10">
    <location>
        <begin position="1"/>
        <end position="102"/>
    </location>
</feature>
<protein>
    <recommendedName>
        <fullName evidence="1">Small ribosomal subunit protein uS10</fullName>
    </recommendedName>
    <alternativeName>
        <fullName evidence="2">30S ribosomal protein S10</fullName>
    </alternativeName>
</protein>
<accession>Q5XED6</accession>
<comment type="function">
    <text evidence="1">Involved in the binding of tRNA to the ribosomes.</text>
</comment>
<comment type="subunit">
    <text evidence="1">Part of the 30S ribosomal subunit.</text>
</comment>
<comment type="similarity">
    <text evidence="1">Belongs to the universal ribosomal protein uS10 family.</text>
</comment>
<gene>
    <name evidence="1" type="primary">rpsJ</name>
    <name type="ordered locus">M6_Spy0092</name>
</gene>
<name>RS10_STRP6</name>
<reference key="1">
    <citation type="journal article" date="2004" name="J. Infect. Dis.">
        <title>Progress toward characterization of the group A Streptococcus metagenome: complete genome sequence of a macrolide-resistant serotype M6 strain.</title>
        <authorList>
            <person name="Banks D.J."/>
            <person name="Porcella S.F."/>
            <person name="Barbian K.D."/>
            <person name="Beres S.B."/>
            <person name="Philips L.E."/>
            <person name="Voyich J.M."/>
            <person name="DeLeo F.R."/>
            <person name="Martin J.M."/>
            <person name="Somerville G.A."/>
            <person name="Musser J.M."/>
        </authorList>
    </citation>
    <scope>NUCLEOTIDE SEQUENCE [LARGE SCALE GENOMIC DNA]</scope>
    <source>
        <strain>ATCC BAA-946 / MGAS10394</strain>
    </source>
</reference>
<organism>
    <name type="scientific">Streptococcus pyogenes serotype M6 (strain ATCC BAA-946 / MGAS10394)</name>
    <dbReference type="NCBI Taxonomy" id="286636"/>
    <lineage>
        <taxon>Bacteria</taxon>
        <taxon>Bacillati</taxon>
        <taxon>Bacillota</taxon>
        <taxon>Bacilli</taxon>
        <taxon>Lactobacillales</taxon>
        <taxon>Streptococcaceae</taxon>
        <taxon>Streptococcus</taxon>
    </lineage>
</organism>
<evidence type="ECO:0000255" key="1">
    <source>
        <dbReference type="HAMAP-Rule" id="MF_00508"/>
    </source>
</evidence>
<evidence type="ECO:0000305" key="2"/>
<proteinExistence type="inferred from homology"/>
<keyword id="KW-0687">Ribonucleoprotein</keyword>
<keyword id="KW-0689">Ribosomal protein</keyword>
<sequence>MANKKIRIRLKAYEHRTLDTAAEKIVETATRTGATVAGPVPLPTERSLYTIIRATHKYKDSREQFEMRTHKRLVDIINPTQKTVDALMKLDLPSGVNVEIKL</sequence>
<dbReference type="EMBL" id="CP000003">
    <property type="protein sequence ID" value="AAT86227.1"/>
    <property type="molecule type" value="Genomic_DNA"/>
</dbReference>
<dbReference type="RefSeq" id="WP_001284518.1">
    <property type="nucleotide sequence ID" value="NC_006086.1"/>
</dbReference>
<dbReference type="SMR" id="Q5XED6"/>
<dbReference type="GeneID" id="69900025"/>
<dbReference type="KEGG" id="spa:M6_Spy0092"/>
<dbReference type="HOGENOM" id="CLU_122625_1_3_9"/>
<dbReference type="Proteomes" id="UP000001167">
    <property type="component" value="Chromosome"/>
</dbReference>
<dbReference type="GO" id="GO:1990904">
    <property type="term" value="C:ribonucleoprotein complex"/>
    <property type="evidence" value="ECO:0007669"/>
    <property type="project" value="UniProtKB-KW"/>
</dbReference>
<dbReference type="GO" id="GO:0005840">
    <property type="term" value="C:ribosome"/>
    <property type="evidence" value="ECO:0007669"/>
    <property type="project" value="UniProtKB-KW"/>
</dbReference>
<dbReference type="GO" id="GO:0003735">
    <property type="term" value="F:structural constituent of ribosome"/>
    <property type="evidence" value="ECO:0007669"/>
    <property type="project" value="InterPro"/>
</dbReference>
<dbReference type="GO" id="GO:0000049">
    <property type="term" value="F:tRNA binding"/>
    <property type="evidence" value="ECO:0007669"/>
    <property type="project" value="UniProtKB-UniRule"/>
</dbReference>
<dbReference type="GO" id="GO:0006412">
    <property type="term" value="P:translation"/>
    <property type="evidence" value="ECO:0007669"/>
    <property type="project" value="UniProtKB-UniRule"/>
</dbReference>
<dbReference type="FunFam" id="3.30.70.600:FF:000001">
    <property type="entry name" value="30S ribosomal protein S10"/>
    <property type="match status" value="1"/>
</dbReference>
<dbReference type="Gene3D" id="3.30.70.600">
    <property type="entry name" value="Ribosomal protein S10 domain"/>
    <property type="match status" value="1"/>
</dbReference>
<dbReference type="HAMAP" id="MF_00508">
    <property type="entry name" value="Ribosomal_uS10"/>
    <property type="match status" value="1"/>
</dbReference>
<dbReference type="InterPro" id="IPR001848">
    <property type="entry name" value="Ribosomal_uS10"/>
</dbReference>
<dbReference type="InterPro" id="IPR018268">
    <property type="entry name" value="Ribosomal_uS10_CS"/>
</dbReference>
<dbReference type="InterPro" id="IPR027486">
    <property type="entry name" value="Ribosomal_uS10_dom"/>
</dbReference>
<dbReference type="InterPro" id="IPR036838">
    <property type="entry name" value="Ribosomal_uS10_dom_sf"/>
</dbReference>
<dbReference type="NCBIfam" id="NF001861">
    <property type="entry name" value="PRK00596.1"/>
    <property type="match status" value="1"/>
</dbReference>
<dbReference type="NCBIfam" id="TIGR01049">
    <property type="entry name" value="rpsJ_bact"/>
    <property type="match status" value="1"/>
</dbReference>
<dbReference type="PANTHER" id="PTHR11700">
    <property type="entry name" value="30S RIBOSOMAL PROTEIN S10 FAMILY MEMBER"/>
    <property type="match status" value="1"/>
</dbReference>
<dbReference type="Pfam" id="PF00338">
    <property type="entry name" value="Ribosomal_S10"/>
    <property type="match status" value="1"/>
</dbReference>
<dbReference type="PRINTS" id="PR00971">
    <property type="entry name" value="RIBOSOMALS10"/>
</dbReference>
<dbReference type="SMART" id="SM01403">
    <property type="entry name" value="Ribosomal_S10"/>
    <property type="match status" value="1"/>
</dbReference>
<dbReference type="SUPFAM" id="SSF54999">
    <property type="entry name" value="Ribosomal protein S10"/>
    <property type="match status" value="1"/>
</dbReference>
<dbReference type="PROSITE" id="PS00361">
    <property type="entry name" value="RIBOSOMAL_S10"/>
    <property type="match status" value="1"/>
</dbReference>